<dbReference type="EMBL" id="AY189809">
    <property type="protein sequence ID" value="AAO38517.1"/>
    <property type="molecule type" value="mRNA"/>
</dbReference>
<dbReference type="SMR" id="Q86PR5"/>
<dbReference type="GO" id="GO:0005615">
    <property type="term" value="C:extracellular space"/>
    <property type="evidence" value="ECO:0007669"/>
    <property type="project" value="TreeGrafter"/>
</dbReference>
<dbReference type="GO" id="GO:0019731">
    <property type="term" value="P:antibacterial humoral response"/>
    <property type="evidence" value="ECO:0007669"/>
    <property type="project" value="InterPro"/>
</dbReference>
<dbReference type="GO" id="GO:0050829">
    <property type="term" value="P:defense response to Gram-negative bacterium"/>
    <property type="evidence" value="ECO:0007669"/>
    <property type="project" value="TreeGrafter"/>
</dbReference>
<dbReference type="GO" id="GO:0050830">
    <property type="term" value="P:defense response to Gram-positive bacterium"/>
    <property type="evidence" value="ECO:0007669"/>
    <property type="project" value="UniProtKB-ARBA"/>
</dbReference>
<dbReference type="GO" id="GO:0045087">
    <property type="term" value="P:innate immune response"/>
    <property type="evidence" value="ECO:0007669"/>
    <property type="project" value="UniProtKB-KW"/>
</dbReference>
<dbReference type="InterPro" id="IPR000875">
    <property type="entry name" value="Cecropin"/>
</dbReference>
<dbReference type="InterPro" id="IPR020400">
    <property type="entry name" value="Cecropin_insect"/>
</dbReference>
<dbReference type="PANTHER" id="PTHR38329">
    <property type="entry name" value="CECROPIN-A1-RELATED"/>
    <property type="match status" value="1"/>
</dbReference>
<dbReference type="PANTHER" id="PTHR38329:SF1">
    <property type="entry name" value="CECROPIN-A1-RELATED"/>
    <property type="match status" value="1"/>
</dbReference>
<dbReference type="Pfam" id="PF00272">
    <property type="entry name" value="Cecropin"/>
    <property type="match status" value="1"/>
</dbReference>
<name>CECB1_CULPP</name>
<sequence>MNFNKLFLIVILAALLLLGQTEAGRLKKLGKKIEKAGKRVFNAVQKGLPVAAGVQALGR</sequence>
<proteinExistence type="inferred from homology"/>
<accession>Q86PR5</accession>
<protein>
    <recommendedName>
        <fullName>Cecropin-B1</fullName>
    </recommendedName>
</protein>
<reference key="1">
    <citation type="submission" date="2002-12" db="EMBL/GenBank/DDBJ databases">
        <title>Innate immunity in the Culex pipiens-Wuchereria bancrofti host-parasite relationship.</title>
        <authorList>
            <person name="Bartholomay L.C."/>
            <person name="Farid H.A."/>
            <person name="Ramzy R.M."/>
            <person name="Christensen B.M."/>
        </authorList>
    </citation>
    <scope>NUCLEOTIDE SEQUENCE [MRNA]</scope>
    <source>
        <strain>Iowa state</strain>
    </source>
</reference>
<keyword id="KW-0027">Amidation</keyword>
<keyword id="KW-0044">Antibiotic</keyword>
<keyword id="KW-0929">Antimicrobial</keyword>
<keyword id="KW-0391">Immunity</keyword>
<keyword id="KW-0399">Innate immunity</keyword>
<keyword id="KW-0964">Secreted</keyword>
<keyword id="KW-0732">Signal</keyword>
<feature type="signal peptide" evidence="2">
    <location>
        <begin position="1"/>
        <end position="23"/>
    </location>
</feature>
<feature type="chain" id="PRO_0000004837" description="Cecropin-B1">
    <location>
        <begin position="24"/>
        <end position="57"/>
    </location>
</feature>
<feature type="modified residue" description="Leucine amide" evidence="2">
    <location>
        <position position="57"/>
    </location>
</feature>
<gene>
    <name type="primary">CECB1</name>
</gene>
<evidence type="ECO:0000250" key="1"/>
<evidence type="ECO:0000255" key="2"/>
<evidence type="ECO:0000305" key="3"/>
<organism>
    <name type="scientific">Culex pipiens pipiens</name>
    <name type="common">Northern house mosquito</name>
    <dbReference type="NCBI Taxonomy" id="38569"/>
    <lineage>
        <taxon>Eukaryota</taxon>
        <taxon>Metazoa</taxon>
        <taxon>Ecdysozoa</taxon>
        <taxon>Arthropoda</taxon>
        <taxon>Hexapoda</taxon>
        <taxon>Insecta</taxon>
        <taxon>Pterygota</taxon>
        <taxon>Neoptera</taxon>
        <taxon>Endopterygota</taxon>
        <taxon>Diptera</taxon>
        <taxon>Nematocera</taxon>
        <taxon>Culicoidea</taxon>
        <taxon>Culicidae</taxon>
        <taxon>Culicinae</taxon>
        <taxon>Culicini</taxon>
        <taxon>Culex</taxon>
        <taxon>Culex</taxon>
    </lineage>
</organism>
<comment type="function">
    <text evidence="1">Cecropins have lytic and antibacterial activity against several Gram-positive and Gram-negative bacteria.</text>
</comment>
<comment type="subcellular location">
    <subcellularLocation>
        <location evidence="1">Secreted</location>
    </subcellularLocation>
</comment>
<comment type="similarity">
    <text evidence="3">Belongs to the cecropin family.</text>
</comment>